<proteinExistence type="inferred from homology"/>
<comment type="function">
    <text evidence="1">One of the components of the core complex of photosystem II (PSII), required for its stability and/or assembly. PSII is a light-driven water:plastoquinone oxidoreductase that uses light energy to abstract electrons from H(2)O, generating O(2) and a proton gradient subsequently used for ATP formation. It consists of a core antenna complex that captures photons, and an electron transfer chain that converts photonic excitation into a charge separation.</text>
</comment>
<comment type="subunit">
    <text evidence="1">PSII is composed of 1 copy each of membrane proteins PsbA, PsbB, PsbC, PsbD, PsbE, PsbF, PsbH, PsbI, PsbJ, PsbK, PsbL, PsbM, PsbT, PsbX, PsbY, PsbZ, Psb30/Ycf12, peripheral proteins PsbO, CyanoQ (PsbQ), PsbU, PsbV and a large number of cofactors. It forms dimeric complexes.</text>
</comment>
<comment type="subcellular location">
    <subcellularLocation>
        <location evidence="1">Cellular thylakoid membrane</location>
        <topology evidence="1">Single-pass membrane protein</topology>
    </subcellularLocation>
</comment>
<comment type="similarity">
    <text evidence="1">Belongs to the PsbH family.</text>
</comment>
<name>PSBH_PICP2</name>
<organism>
    <name type="scientific">Picosynechococcus sp. (strain ATCC 27264 / PCC 7002 / PR-6)</name>
    <name type="common">Agmenellum quadruplicatum</name>
    <dbReference type="NCBI Taxonomy" id="32049"/>
    <lineage>
        <taxon>Bacteria</taxon>
        <taxon>Bacillati</taxon>
        <taxon>Cyanobacteriota</taxon>
        <taxon>Cyanophyceae</taxon>
        <taxon>Oscillatoriophycideae</taxon>
        <taxon>Chroococcales</taxon>
        <taxon>Geminocystaceae</taxon>
        <taxon>Picosynechococcus</taxon>
    </lineage>
</organism>
<protein>
    <recommendedName>
        <fullName evidence="1">Photosystem II reaction center protein H</fullName>
        <shortName evidence="1">PSII-H</shortName>
    </recommendedName>
</protein>
<sequence length="67" mass="7478">MAQRTRLGDILKPLNSEYGKVAPGWGTTPLMGVFMALFLVFLLIILQIYNSSLILEGFEVDWTALGF</sequence>
<keyword id="KW-0472">Membrane</keyword>
<keyword id="KW-0602">Photosynthesis</keyword>
<keyword id="KW-0604">Photosystem II</keyword>
<keyword id="KW-1185">Reference proteome</keyword>
<keyword id="KW-0793">Thylakoid</keyword>
<keyword id="KW-0812">Transmembrane</keyword>
<keyword id="KW-1133">Transmembrane helix</keyword>
<gene>
    <name evidence="1" type="primary">psbH</name>
    <name type="ordered locus">SYNPCC7002_A0808</name>
</gene>
<feature type="chain" id="PRO_1000192874" description="Photosystem II reaction center protein H">
    <location>
        <begin position="1"/>
        <end position="67"/>
    </location>
</feature>
<feature type="transmembrane region" description="Helical" evidence="1">
    <location>
        <begin position="29"/>
        <end position="49"/>
    </location>
</feature>
<dbReference type="EMBL" id="CP000951">
    <property type="protein sequence ID" value="ACA98812.1"/>
    <property type="molecule type" value="Genomic_DNA"/>
</dbReference>
<dbReference type="RefSeq" id="WP_012306436.1">
    <property type="nucleotide sequence ID" value="NZ_JAHHPU010000001.1"/>
</dbReference>
<dbReference type="SMR" id="B1XIE1"/>
<dbReference type="STRING" id="32049.SYNPCC7002_A0808"/>
<dbReference type="KEGG" id="syp:SYNPCC7002_A0808"/>
<dbReference type="eggNOG" id="ENOG50332MV">
    <property type="taxonomic scope" value="Bacteria"/>
</dbReference>
<dbReference type="HOGENOM" id="CLU_190203_0_0_3"/>
<dbReference type="Proteomes" id="UP000001688">
    <property type="component" value="Chromosome"/>
</dbReference>
<dbReference type="GO" id="GO:0009523">
    <property type="term" value="C:photosystem II"/>
    <property type="evidence" value="ECO:0007669"/>
    <property type="project" value="UniProtKB-KW"/>
</dbReference>
<dbReference type="GO" id="GO:0031676">
    <property type="term" value="C:plasma membrane-derived thylakoid membrane"/>
    <property type="evidence" value="ECO:0007669"/>
    <property type="project" value="UniProtKB-SubCell"/>
</dbReference>
<dbReference type="GO" id="GO:0042301">
    <property type="term" value="F:phosphate ion binding"/>
    <property type="evidence" value="ECO:0007669"/>
    <property type="project" value="InterPro"/>
</dbReference>
<dbReference type="GO" id="GO:0015979">
    <property type="term" value="P:photosynthesis"/>
    <property type="evidence" value="ECO:0007669"/>
    <property type="project" value="UniProtKB-UniRule"/>
</dbReference>
<dbReference type="GO" id="GO:0050821">
    <property type="term" value="P:protein stabilization"/>
    <property type="evidence" value="ECO:0007669"/>
    <property type="project" value="InterPro"/>
</dbReference>
<dbReference type="FunFam" id="1.20.5.880:FF:000002">
    <property type="entry name" value="Photosystem II reaction center protein H"/>
    <property type="match status" value="1"/>
</dbReference>
<dbReference type="Gene3D" id="1.20.5.880">
    <property type="entry name" value="Photosystem II reaction center protein H"/>
    <property type="match status" value="1"/>
</dbReference>
<dbReference type="HAMAP" id="MF_00752">
    <property type="entry name" value="PSII_PsbH"/>
    <property type="match status" value="1"/>
</dbReference>
<dbReference type="InterPro" id="IPR001056">
    <property type="entry name" value="PSII_PsbH"/>
</dbReference>
<dbReference type="InterPro" id="IPR036863">
    <property type="entry name" value="PSII_PsbH_sf"/>
</dbReference>
<dbReference type="NCBIfam" id="NF002728">
    <property type="entry name" value="PRK02624.1"/>
    <property type="match status" value="1"/>
</dbReference>
<dbReference type="PANTHER" id="PTHR34469">
    <property type="entry name" value="PHOTOSYSTEM II REACTION CENTER PROTEIN H"/>
    <property type="match status" value="1"/>
</dbReference>
<dbReference type="PANTHER" id="PTHR34469:SF4">
    <property type="entry name" value="PHOTOSYSTEM II REACTION CENTER PROTEIN H"/>
    <property type="match status" value="1"/>
</dbReference>
<dbReference type="Pfam" id="PF00737">
    <property type="entry name" value="PsbH"/>
    <property type="match status" value="1"/>
</dbReference>
<dbReference type="SUPFAM" id="SSF161025">
    <property type="entry name" value="Photosystem II 10 kDa phosphoprotein PsbH"/>
    <property type="match status" value="1"/>
</dbReference>
<accession>B1XIE1</accession>
<evidence type="ECO:0000255" key="1">
    <source>
        <dbReference type="HAMAP-Rule" id="MF_00752"/>
    </source>
</evidence>
<reference key="1">
    <citation type="submission" date="2008-02" db="EMBL/GenBank/DDBJ databases">
        <title>Complete sequence of Synechococcus sp. PCC 7002.</title>
        <authorList>
            <person name="Li T."/>
            <person name="Zhao J."/>
            <person name="Zhao C."/>
            <person name="Liu Z."/>
            <person name="Zhao F."/>
            <person name="Marquardt J."/>
            <person name="Nomura C.T."/>
            <person name="Persson S."/>
            <person name="Detter J.C."/>
            <person name="Richardson P.M."/>
            <person name="Lanz C."/>
            <person name="Schuster S.C."/>
            <person name="Wang J."/>
            <person name="Li S."/>
            <person name="Huang X."/>
            <person name="Cai T."/>
            <person name="Yu Z."/>
            <person name="Luo J."/>
            <person name="Zhao J."/>
            <person name="Bryant D.A."/>
        </authorList>
    </citation>
    <scope>NUCLEOTIDE SEQUENCE [LARGE SCALE GENOMIC DNA]</scope>
    <source>
        <strain>ATCC 27264 / PCC 7002 / PR-6</strain>
    </source>
</reference>